<keyword id="KW-0297">G-protein coupled receptor</keyword>
<keyword id="KW-0325">Glycoprotein</keyword>
<keyword id="KW-0472">Membrane</keyword>
<keyword id="KW-0675">Receptor</keyword>
<keyword id="KW-1185">Reference proteome</keyword>
<keyword id="KW-0716">Sensory transduction</keyword>
<keyword id="KW-0919">Taste</keyword>
<keyword id="KW-0807">Transducer</keyword>
<keyword id="KW-0812">Transmembrane</keyword>
<keyword id="KW-1133">Transmembrane helix</keyword>
<feature type="chain" id="PRO_0000082356" description="Taste receptor type 2 member 62">
    <location>
        <begin position="1"/>
        <end position="312"/>
    </location>
</feature>
<feature type="topological domain" description="Extracellular" evidence="2">
    <location>
        <begin position="1"/>
        <end position="4"/>
    </location>
</feature>
<feature type="transmembrane region" description="Helical; Name=1" evidence="2">
    <location>
        <begin position="5"/>
        <end position="27"/>
    </location>
</feature>
<feature type="topological domain" description="Cytoplasmic" evidence="2">
    <location>
        <begin position="28"/>
        <end position="39"/>
    </location>
</feature>
<feature type="transmembrane region" description="Helical; Name=2" evidence="2">
    <location>
        <begin position="40"/>
        <end position="62"/>
    </location>
</feature>
<feature type="topological domain" description="Extracellular" evidence="2">
    <location>
        <begin position="63"/>
        <end position="81"/>
    </location>
</feature>
<feature type="transmembrane region" description="Helical; Name=3" evidence="2">
    <location>
        <begin position="82"/>
        <end position="104"/>
    </location>
</feature>
<feature type="topological domain" description="Cytoplasmic" evidence="2">
    <location>
        <begin position="105"/>
        <end position="127"/>
    </location>
</feature>
<feature type="transmembrane region" description="Helical; Name=4" evidence="2">
    <location>
        <begin position="128"/>
        <end position="150"/>
    </location>
</feature>
<feature type="topological domain" description="Extracellular" evidence="2">
    <location>
        <begin position="151"/>
        <end position="182"/>
    </location>
</feature>
<feature type="transmembrane region" description="Helical; Name=5" evidence="2">
    <location>
        <begin position="183"/>
        <end position="205"/>
    </location>
</feature>
<feature type="topological domain" description="Cytoplasmic" evidence="2">
    <location>
        <begin position="206"/>
        <end position="231"/>
    </location>
</feature>
<feature type="transmembrane region" description="Helical; Name=6" evidence="2">
    <location>
        <begin position="232"/>
        <end position="254"/>
    </location>
</feature>
<feature type="topological domain" description="Extracellular" evidence="2">
    <location>
        <begin position="255"/>
        <end position="258"/>
    </location>
</feature>
<feature type="transmembrane region" description="Helical; Name=7" evidence="2">
    <location>
        <begin position="259"/>
        <end position="281"/>
    </location>
</feature>
<feature type="topological domain" description="Cytoplasmic" evidence="2">
    <location>
        <begin position="282"/>
        <end position="312"/>
    </location>
</feature>
<feature type="glycosylation site" description="N-linked (GlcNAc...) asparagine" evidence="2">
    <location>
        <position position="162"/>
    </location>
</feature>
<accession>Q5Y4Z0</accession>
<dbReference type="EMBL" id="AY677157">
    <property type="protein sequence ID" value="AAV28585.1"/>
    <property type="molecule type" value="Genomic_DNA"/>
</dbReference>
<dbReference type="SMR" id="Q5Y4Z0"/>
<dbReference type="GlyCosmos" id="Q5Y4Z0">
    <property type="glycosylation" value="1 site, No reported glycans"/>
</dbReference>
<dbReference type="eggNOG" id="ENOG502S2SI">
    <property type="taxonomic scope" value="Eukaryota"/>
</dbReference>
<dbReference type="Proteomes" id="UP000240080">
    <property type="component" value="Unplaced"/>
</dbReference>
<dbReference type="GO" id="GO:0005886">
    <property type="term" value="C:plasma membrane"/>
    <property type="evidence" value="ECO:0007669"/>
    <property type="project" value="UniProtKB-ARBA"/>
</dbReference>
<dbReference type="GO" id="GO:0033038">
    <property type="term" value="F:bitter taste receptor activity"/>
    <property type="evidence" value="ECO:0007669"/>
    <property type="project" value="InterPro"/>
</dbReference>
<dbReference type="GO" id="GO:0004930">
    <property type="term" value="F:G protein-coupled receptor activity"/>
    <property type="evidence" value="ECO:0007669"/>
    <property type="project" value="UniProtKB-KW"/>
</dbReference>
<dbReference type="CDD" id="cd15017">
    <property type="entry name" value="7tm_TAS2R16"/>
    <property type="match status" value="1"/>
</dbReference>
<dbReference type="FunFam" id="1.20.1070.10:FF:000055">
    <property type="entry name" value="Taste receptor type 2"/>
    <property type="match status" value="1"/>
</dbReference>
<dbReference type="Gene3D" id="1.20.1070.10">
    <property type="entry name" value="Rhodopsin 7-helix transmembrane proteins"/>
    <property type="match status" value="1"/>
</dbReference>
<dbReference type="InterPro" id="IPR007960">
    <property type="entry name" value="TAS2R"/>
</dbReference>
<dbReference type="PANTHER" id="PTHR11394">
    <property type="entry name" value="TASTE RECEPTOR TYPE 2"/>
    <property type="match status" value="1"/>
</dbReference>
<dbReference type="PANTHER" id="PTHR11394:SF69">
    <property type="entry name" value="TASTE RECEPTOR TYPE 2 MEMBER 134"/>
    <property type="match status" value="1"/>
</dbReference>
<dbReference type="Pfam" id="PF05296">
    <property type="entry name" value="TAS2R"/>
    <property type="match status" value="1"/>
</dbReference>
<dbReference type="SUPFAM" id="SSF81321">
    <property type="entry name" value="Family A G protein-coupled receptor-like"/>
    <property type="match status" value="1"/>
</dbReference>
<proteinExistence type="inferred from homology"/>
<organism>
    <name type="scientific">Pan paniscus</name>
    <name type="common">Pygmy chimpanzee</name>
    <name type="synonym">Bonobo</name>
    <dbReference type="NCBI Taxonomy" id="9597"/>
    <lineage>
        <taxon>Eukaryota</taxon>
        <taxon>Metazoa</taxon>
        <taxon>Chordata</taxon>
        <taxon>Craniata</taxon>
        <taxon>Vertebrata</taxon>
        <taxon>Euteleostomi</taxon>
        <taxon>Mammalia</taxon>
        <taxon>Eutheria</taxon>
        <taxon>Euarchontoglires</taxon>
        <taxon>Primates</taxon>
        <taxon>Haplorrhini</taxon>
        <taxon>Catarrhini</taxon>
        <taxon>Hominidae</taxon>
        <taxon>Pan</taxon>
    </lineage>
</organism>
<gene>
    <name type="primary">TAS2R62</name>
</gene>
<name>T2R62_PANPA</name>
<comment type="function">
    <text evidence="1">Receptor that may play a role in the perception of bitterness and is gustducin-linked. May play a role in sensing the chemical composition of the gastrointestinal content. The activity of this receptor may stimulate alpha gustducin, mediate PLC-beta-2 activation and lead to the gating of TRPM5 (By similarity).</text>
</comment>
<comment type="subcellular location">
    <subcellularLocation>
        <location>Membrane</location>
        <topology>Multi-pass membrane protein</topology>
    </subcellularLocation>
</comment>
<comment type="miscellaneous">
    <text>Most taste cells may be activated by a limited number of bitter compounds; individual taste cells can discriminate among bitter stimuli.</text>
</comment>
<comment type="miscellaneous">
    <text>The human orthologous protein does not exist, its gene is a pseudogene.</text>
</comment>
<comment type="similarity">
    <text evidence="3">Belongs to the G-protein coupled receptor T2R family.</text>
</comment>
<sequence>MPSLPTLIFIAIFCLESLAAMLQNGFLVTMLGREWVRCRMLSTSDMIVACLAASRFCLHGVAMANNLLASLDFSRAVPYMNIFWDLFNALTLWFTALLAAFYCVKISSFSHPTFAWLKWRISRLVPKLIKGSLIICGLEVISSATGNILFGQRKVSLSSYRNETLVYRVQASFQLYFFLYDGFVWSIPFLLFLVSTVLLIVSLCWQLGQMRDLRPGPCDPSTQAYTMALKSLTFSLIFCTLYFLSLFASALKIINFQNHWHWAWEVLIYANICLHSTVLVLRSPKLKKGLKTWPQLQCPCDAGSQGFGRCWP</sequence>
<protein>
    <recommendedName>
        <fullName>Taste receptor type 2 member 62</fullName>
        <shortName>T2R62</shortName>
    </recommendedName>
</protein>
<reference key="1">
    <citation type="journal article" date="2004" name="Proc. Natl. Acad. Sci. U.S.A.">
        <title>Divergence of T2R chemosensory receptor families in humans, bonobos, and chimpanzees.</title>
        <authorList>
            <person name="Parry C.M."/>
            <person name="Erkner A."/>
            <person name="le Coutre J."/>
        </authorList>
    </citation>
    <scope>NUCLEOTIDE SEQUENCE [GENOMIC DNA]</scope>
</reference>
<evidence type="ECO:0000250" key="1"/>
<evidence type="ECO:0000255" key="2"/>
<evidence type="ECO:0000305" key="3"/>